<dbReference type="EC" id="1.1.1.267" evidence="1"/>
<dbReference type="EMBL" id="AF282879">
    <property type="protein sequence ID" value="AAF97241.1"/>
    <property type="molecule type" value="Genomic_DNA"/>
</dbReference>
<dbReference type="EMBL" id="AE004091">
    <property type="protein sequence ID" value="AAG07038.1"/>
    <property type="molecule type" value="Genomic_DNA"/>
</dbReference>
<dbReference type="PIR" id="E83188">
    <property type="entry name" value="E83188"/>
</dbReference>
<dbReference type="RefSeq" id="NP_252340.1">
    <property type="nucleotide sequence ID" value="NC_002516.2"/>
</dbReference>
<dbReference type="SMR" id="Q9KGU6"/>
<dbReference type="FunCoup" id="Q9KGU6">
    <property type="interactions" value="417"/>
</dbReference>
<dbReference type="STRING" id="208964.PA3650"/>
<dbReference type="PaxDb" id="208964-PA3650"/>
<dbReference type="GeneID" id="880464"/>
<dbReference type="KEGG" id="pae:PA3650"/>
<dbReference type="PATRIC" id="fig|208964.12.peg.3819"/>
<dbReference type="PseudoCAP" id="PA3650"/>
<dbReference type="HOGENOM" id="CLU_035714_4_0_6"/>
<dbReference type="InParanoid" id="Q9KGU6"/>
<dbReference type="OrthoDB" id="9806546at2"/>
<dbReference type="PhylomeDB" id="Q9KGU6"/>
<dbReference type="BioCyc" id="PAER208964:G1FZ6-3720-MONOMER"/>
<dbReference type="UniPathway" id="UPA00056">
    <property type="reaction ID" value="UER00092"/>
</dbReference>
<dbReference type="Proteomes" id="UP000002438">
    <property type="component" value="Chromosome"/>
</dbReference>
<dbReference type="GO" id="GO:0030604">
    <property type="term" value="F:1-deoxy-D-xylulose-5-phosphate reductoisomerase activity"/>
    <property type="evidence" value="ECO:0000318"/>
    <property type="project" value="GO_Central"/>
</dbReference>
<dbReference type="GO" id="GO:0030145">
    <property type="term" value="F:manganese ion binding"/>
    <property type="evidence" value="ECO:0000318"/>
    <property type="project" value="GO_Central"/>
</dbReference>
<dbReference type="GO" id="GO:0070402">
    <property type="term" value="F:NADPH binding"/>
    <property type="evidence" value="ECO:0000318"/>
    <property type="project" value="GO_Central"/>
</dbReference>
<dbReference type="GO" id="GO:0051484">
    <property type="term" value="P:isopentenyl diphosphate biosynthetic process, methylerythritol 4-phosphate pathway involved in terpenoid biosynthetic process"/>
    <property type="evidence" value="ECO:0000318"/>
    <property type="project" value="GO_Central"/>
</dbReference>
<dbReference type="FunFam" id="1.10.1740.10:FF:000004">
    <property type="entry name" value="1-deoxy-D-xylulose 5-phosphate reductoisomerase"/>
    <property type="match status" value="1"/>
</dbReference>
<dbReference type="FunFam" id="3.40.50.720:FF:000045">
    <property type="entry name" value="1-deoxy-D-xylulose 5-phosphate reductoisomerase"/>
    <property type="match status" value="1"/>
</dbReference>
<dbReference type="Gene3D" id="1.10.1740.10">
    <property type="match status" value="1"/>
</dbReference>
<dbReference type="Gene3D" id="3.40.50.720">
    <property type="entry name" value="NAD(P)-binding Rossmann-like Domain"/>
    <property type="match status" value="1"/>
</dbReference>
<dbReference type="HAMAP" id="MF_00183">
    <property type="entry name" value="DXP_reductoisom"/>
    <property type="match status" value="1"/>
</dbReference>
<dbReference type="InterPro" id="IPR003821">
    <property type="entry name" value="DXP_reductoisomerase"/>
</dbReference>
<dbReference type="InterPro" id="IPR013644">
    <property type="entry name" value="DXP_reductoisomerase_C"/>
</dbReference>
<dbReference type="InterPro" id="IPR013512">
    <property type="entry name" value="DXP_reductoisomerase_N"/>
</dbReference>
<dbReference type="InterPro" id="IPR026877">
    <property type="entry name" value="DXPR_C"/>
</dbReference>
<dbReference type="InterPro" id="IPR036169">
    <property type="entry name" value="DXPR_C_sf"/>
</dbReference>
<dbReference type="InterPro" id="IPR036291">
    <property type="entry name" value="NAD(P)-bd_dom_sf"/>
</dbReference>
<dbReference type="NCBIfam" id="TIGR00243">
    <property type="entry name" value="Dxr"/>
    <property type="match status" value="1"/>
</dbReference>
<dbReference type="NCBIfam" id="NF003938">
    <property type="entry name" value="PRK05447.1-1"/>
    <property type="match status" value="1"/>
</dbReference>
<dbReference type="NCBIfam" id="NF009114">
    <property type="entry name" value="PRK12464.1"/>
    <property type="match status" value="1"/>
</dbReference>
<dbReference type="PANTHER" id="PTHR30525">
    <property type="entry name" value="1-DEOXY-D-XYLULOSE 5-PHOSPHATE REDUCTOISOMERASE"/>
    <property type="match status" value="1"/>
</dbReference>
<dbReference type="PANTHER" id="PTHR30525:SF0">
    <property type="entry name" value="1-DEOXY-D-XYLULOSE 5-PHOSPHATE REDUCTOISOMERASE, CHLOROPLASTIC"/>
    <property type="match status" value="1"/>
</dbReference>
<dbReference type="Pfam" id="PF08436">
    <property type="entry name" value="DXP_redisom_C"/>
    <property type="match status" value="1"/>
</dbReference>
<dbReference type="Pfam" id="PF02670">
    <property type="entry name" value="DXP_reductoisom"/>
    <property type="match status" value="1"/>
</dbReference>
<dbReference type="Pfam" id="PF13288">
    <property type="entry name" value="DXPR_C"/>
    <property type="match status" value="1"/>
</dbReference>
<dbReference type="PIRSF" id="PIRSF006205">
    <property type="entry name" value="Dxp_reductismrs"/>
    <property type="match status" value="1"/>
</dbReference>
<dbReference type="SUPFAM" id="SSF69055">
    <property type="entry name" value="1-deoxy-D-xylulose-5-phosphate reductoisomerase, C-terminal domain"/>
    <property type="match status" value="1"/>
</dbReference>
<dbReference type="SUPFAM" id="SSF55347">
    <property type="entry name" value="Glyceraldehyde-3-phosphate dehydrogenase-like, C-terminal domain"/>
    <property type="match status" value="1"/>
</dbReference>
<dbReference type="SUPFAM" id="SSF51735">
    <property type="entry name" value="NAD(P)-binding Rossmann-fold domains"/>
    <property type="match status" value="1"/>
</dbReference>
<reference key="1">
    <citation type="journal article" date="2000" name="FEMS Microbiol. Lett.">
        <title>Tools for discovery of inhibitors of the 1-deoxy-D-xylulose 5-phosphate (DXP) synthase and DXP reductoisomerase: an approach with enzymes from the pathogenic bacterium Pseudomonas aeruginosa.</title>
        <authorList>
            <person name="Altincicek B."/>
            <person name="Hintz M."/>
            <person name="Sanderbrand S."/>
            <person name="Wiesner J."/>
            <person name="Beck E."/>
            <person name="Jomaa H."/>
        </authorList>
    </citation>
    <scope>NUCLEOTIDE SEQUENCE [GENOMIC DNA]</scope>
    <scope>CHARACTERIZATION</scope>
</reference>
<reference key="2">
    <citation type="journal article" date="2000" name="Nature">
        <title>Complete genome sequence of Pseudomonas aeruginosa PAO1, an opportunistic pathogen.</title>
        <authorList>
            <person name="Stover C.K."/>
            <person name="Pham X.-Q.T."/>
            <person name="Erwin A.L."/>
            <person name="Mizoguchi S.D."/>
            <person name="Warrener P."/>
            <person name="Hickey M.J."/>
            <person name="Brinkman F.S.L."/>
            <person name="Hufnagle W.O."/>
            <person name="Kowalik D.J."/>
            <person name="Lagrou M."/>
            <person name="Garber R.L."/>
            <person name="Goltry L."/>
            <person name="Tolentino E."/>
            <person name="Westbrock-Wadman S."/>
            <person name="Yuan Y."/>
            <person name="Brody L.L."/>
            <person name="Coulter S.N."/>
            <person name="Folger K.R."/>
            <person name="Kas A."/>
            <person name="Larbig K."/>
            <person name="Lim R.M."/>
            <person name="Smith K.A."/>
            <person name="Spencer D.H."/>
            <person name="Wong G.K.-S."/>
            <person name="Wu Z."/>
            <person name="Paulsen I.T."/>
            <person name="Reizer J."/>
            <person name="Saier M.H. Jr."/>
            <person name="Hancock R.E.W."/>
            <person name="Lory S."/>
            <person name="Olson M.V."/>
        </authorList>
    </citation>
    <scope>NUCLEOTIDE SEQUENCE [LARGE SCALE GENOMIC DNA]</scope>
    <source>
        <strain>ATCC 15692 / DSM 22644 / CIP 104116 / JCM 14847 / LMG 12228 / 1C / PRS 101 / PAO1</strain>
    </source>
</reference>
<organism>
    <name type="scientific">Pseudomonas aeruginosa (strain ATCC 15692 / DSM 22644 / CIP 104116 / JCM 14847 / LMG 12228 / 1C / PRS 101 / PAO1)</name>
    <dbReference type="NCBI Taxonomy" id="208964"/>
    <lineage>
        <taxon>Bacteria</taxon>
        <taxon>Pseudomonadati</taxon>
        <taxon>Pseudomonadota</taxon>
        <taxon>Gammaproteobacteria</taxon>
        <taxon>Pseudomonadales</taxon>
        <taxon>Pseudomonadaceae</taxon>
        <taxon>Pseudomonas</taxon>
    </lineage>
</organism>
<evidence type="ECO:0000255" key="1">
    <source>
        <dbReference type="HAMAP-Rule" id="MF_00183"/>
    </source>
</evidence>
<proteinExistence type="evidence at protein level"/>
<comment type="function">
    <text>Catalyzes the NADPH-dependent rearrangement and reduction of 1-deoxy-D-xylulose-5-phosphate (DXP) to 2-C-methyl-D-erythritol 4-phosphate (MEP).</text>
</comment>
<comment type="catalytic activity">
    <reaction evidence="1">
        <text>2-C-methyl-D-erythritol 4-phosphate + NADP(+) = 1-deoxy-D-xylulose 5-phosphate + NADPH + H(+)</text>
        <dbReference type="Rhea" id="RHEA:13717"/>
        <dbReference type="ChEBI" id="CHEBI:15378"/>
        <dbReference type="ChEBI" id="CHEBI:57783"/>
        <dbReference type="ChEBI" id="CHEBI:57792"/>
        <dbReference type="ChEBI" id="CHEBI:58262"/>
        <dbReference type="ChEBI" id="CHEBI:58349"/>
        <dbReference type="EC" id="1.1.1.267"/>
    </reaction>
    <physiologicalReaction direction="right-to-left" evidence="1">
        <dbReference type="Rhea" id="RHEA:13719"/>
    </physiologicalReaction>
</comment>
<comment type="cofactor">
    <cofactor evidence="1">
        <name>Mg(2+)</name>
        <dbReference type="ChEBI" id="CHEBI:18420"/>
    </cofactor>
    <cofactor evidence="1">
        <name>Mn(2+)</name>
        <dbReference type="ChEBI" id="CHEBI:29035"/>
    </cofactor>
</comment>
<comment type="activity regulation">
    <text>Inhibited by fosmidomycin and 3-(N-acetyl-N-hydroxyamino)-propylphosphonic acid (FR-900098).</text>
</comment>
<comment type="pathway">
    <text evidence="1">Isoprenoid biosynthesis; isopentenyl diphosphate biosynthesis via DXP pathway; isopentenyl diphosphate from 1-deoxy-D-xylulose 5-phosphate: step 1/6.</text>
</comment>
<comment type="similarity">
    <text evidence="1">Belongs to the DXR family.</text>
</comment>
<name>DXR_PSEAE</name>
<keyword id="KW-0414">Isoprene biosynthesis</keyword>
<keyword id="KW-0464">Manganese</keyword>
<keyword id="KW-0479">Metal-binding</keyword>
<keyword id="KW-0521">NADP</keyword>
<keyword id="KW-0560">Oxidoreductase</keyword>
<keyword id="KW-1185">Reference proteome</keyword>
<sequence length="396" mass="42509">MSRPQRISVLGATGSIGLSTLDVVQRHPDRYEAFALTGFSRLAELEALCLRHRPVYAVVPEQAAAIALQGSLAAAGIRTRVLFGEQALCEVASAPEVDMVMAAIVGAAGLPSTLAAVEAGKRVLLANKEALVMSGALFMQAVKRSGAVLLPIDSEHNAIFQSLPRNYADGLERVGVRRILLTASGGPFRETPLEQLASVTPEQACAHPNWSMGRKISVDSASMMNKGLELIEACWLFDAQPSQVEVVIHPQSVIHSMVDYVDGSVIAQLGNPDMRTPISYAMAWPERIDSGVSPLDMFAVGRLDFQRPDEQRFPCLRLASQAAETGGSAPAMLNAANEVAVAAFLERHIRFSDIAVIIEDVLNREAVTAVESLDQVLAADRRARSVAGQWLTRHAG</sequence>
<accession>Q9KGU6</accession>
<protein>
    <recommendedName>
        <fullName evidence="1">1-deoxy-D-xylulose 5-phosphate reductoisomerase</fullName>
        <shortName evidence="1">DXP reductoisomerase</shortName>
        <ecNumber evidence="1">1.1.1.267</ecNumber>
    </recommendedName>
    <alternativeName>
        <fullName evidence="1">1-deoxyxylulose-5-phosphate reductoisomerase</fullName>
    </alternativeName>
    <alternativeName>
        <fullName evidence="1">2-C-methyl-D-erythritol 4-phosphate synthase</fullName>
    </alternativeName>
</protein>
<gene>
    <name evidence="1" type="primary">dxr</name>
    <name type="ordered locus">PA3650</name>
</gene>
<feature type="chain" id="PRO_0000163696" description="1-deoxy-D-xylulose 5-phosphate reductoisomerase">
    <location>
        <begin position="1"/>
        <end position="396"/>
    </location>
</feature>
<feature type="binding site" evidence="1">
    <location>
        <position position="13"/>
    </location>
    <ligand>
        <name>NADPH</name>
        <dbReference type="ChEBI" id="CHEBI:57783"/>
    </ligand>
</feature>
<feature type="binding site" evidence="1">
    <location>
        <position position="14"/>
    </location>
    <ligand>
        <name>NADPH</name>
        <dbReference type="ChEBI" id="CHEBI:57783"/>
    </ligand>
</feature>
<feature type="binding site" evidence="1">
    <location>
        <position position="15"/>
    </location>
    <ligand>
        <name>NADPH</name>
        <dbReference type="ChEBI" id="CHEBI:57783"/>
    </ligand>
</feature>
<feature type="binding site" evidence="1">
    <location>
        <position position="16"/>
    </location>
    <ligand>
        <name>NADPH</name>
        <dbReference type="ChEBI" id="CHEBI:57783"/>
    </ligand>
</feature>
<feature type="binding site" evidence="1">
    <location>
        <position position="127"/>
    </location>
    <ligand>
        <name>NADPH</name>
        <dbReference type="ChEBI" id="CHEBI:57783"/>
    </ligand>
</feature>
<feature type="binding site" evidence="1">
    <location>
        <position position="128"/>
    </location>
    <ligand>
        <name>1-deoxy-D-xylulose 5-phosphate</name>
        <dbReference type="ChEBI" id="CHEBI:57792"/>
    </ligand>
</feature>
<feature type="binding site" evidence="1">
    <location>
        <position position="129"/>
    </location>
    <ligand>
        <name>NADPH</name>
        <dbReference type="ChEBI" id="CHEBI:57783"/>
    </ligand>
</feature>
<feature type="binding site" evidence="1">
    <location>
        <position position="153"/>
    </location>
    <ligand>
        <name>Mn(2+)</name>
        <dbReference type="ChEBI" id="CHEBI:29035"/>
    </ligand>
</feature>
<feature type="binding site" evidence="1">
    <location>
        <position position="154"/>
    </location>
    <ligand>
        <name>1-deoxy-D-xylulose 5-phosphate</name>
        <dbReference type="ChEBI" id="CHEBI:57792"/>
    </ligand>
</feature>
<feature type="binding site" evidence="1">
    <location>
        <position position="155"/>
    </location>
    <ligand>
        <name>1-deoxy-D-xylulose 5-phosphate</name>
        <dbReference type="ChEBI" id="CHEBI:57792"/>
    </ligand>
</feature>
<feature type="binding site" evidence="1">
    <location>
        <position position="155"/>
    </location>
    <ligand>
        <name>Mn(2+)</name>
        <dbReference type="ChEBI" id="CHEBI:29035"/>
    </ligand>
</feature>
<feature type="binding site" evidence="1">
    <location>
        <position position="184"/>
    </location>
    <ligand>
        <name>1-deoxy-D-xylulose 5-phosphate</name>
        <dbReference type="ChEBI" id="CHEBI:57792"/>
    </ligand>
</feature>
<feature type="binding site" evidence="1">
    <location>
        <position position="207"/>
    </location>
    <ligand>
        <name>1-deoxy-D-xylulose 5-phosphate</name>
        <dbReference type="ChEBI" id="CHEBI:57792"/>
    </ligand>
</feature>
<feature type="binding site" evidence="1">
    <location>
        <position position="213"/>
    </location>
    <ligand>
        <name>NADPH</name>
        <dbReference type="ChEBI" id="CHEBI:57783"/>
    </ligand>
</feature>
<feature type="binding site" evidence="1">
    <location>
        <position position="220"/>
    </location>
    <ligand>
        <name>1-deoxy-D-xylulose 5-phosphate</name>
        <dbReference type="ChEBI" id="CHEBI:57792"/>
    </ligand>
</feature>
<feature type="binding site" evidence="1">
    <location>
        <position position="225"/>
    </location>
    <ligand>
        <name>1-deoxy-D-xylulose 5-phosphate</name>
        <dbReference type="ChEBI" id="CHEBI:57792"/>
    </ligand>
</feature>
<feature type="binding site" evidence="1">
    <location>
        <position position="226"/>
    </location>
    <ligand>
        <name>1-deoxy-D-xylulose 5-phosphate</name>
        <dbReference type="ChEBI" id="CHEBI:57792"/>
    </ligand>
</feature>
<feature type="binding site" evidence="1">
    <location>
        <position position="229"/>
    </location>
    <ligand>
        <name>1-deoxy-D-xylulose 5-phosphate</name>
        <dbReference type="ChEBI" id="CHEBI:57792"/>
    </ligand>
</feature>
<feature type="binding site" evidence="1">
    <location>
        <position position="229"/>
    </location>
    <ligand>
        <name>Mn(2+)</name>
        <dbReference type="ChEBI" id="CHEBI:29035"/>
    </ligand>
</feature>